<feature type="chain" id="PRO_0000097844" description="Cyclic pyranopterin monophosphate synthase">
    <location>
        <begin position="1"/>
        <end position="159"/>
    </location>
</feature>
<feature type="active site" evidence="1">
    <location>
        <position position="128"/>
    </location>
</feature>
<feature type="binding site" evidence="1">
    <location>
        <begin position="75"/>
        <end position="77"/>
    </location>
    <ligand>
        <name>substrate</name>
    </ligand>
</feature>
<feature type="binding site" evidence="1">
    <location>
        <begin position="113"/>
        <end position="114"/>
    </location>
    <ligand>
        <name>substrate</name>
    </ligand>
</feature>
<sequence length="159" mass="17093">MSQFTHINASGEANMVDVSAKAETVREARAEAFVHMAPETLQLIVSGQHHKGDVFATARIAGIQAAKKTWDLIPLCHPLLLSKVEVQLEAIEAENKVRIESVCKLAGKTGVEMEALTAASVAALTIYDMCKAVQKDMVIGPVRLLEKTGGKSGHFKVEA</sequence>
<name>MOAC_VIBVY</name>
<gene>
    <name evidence="1" type="primary">moaC</name>
    <name type="ordered locus">VV1200</name>
</gene>
<accession>Q7MM73</accession>
<dbReference type="EC" id="4.6.1.17" evidence="1"/>
<dbReference type="EMBL" id="BA000037">
    <property type="protein sequence ID" value="BAC93964.1"/>
    <property type="molecule type" value="Genomic_DNA"/>
</dbReference>
<dbReference type="RefSeq" id="WP_011149915.1">
    <property type="nucleotide sequence ID" value="NC_005139.1"/>
</dbReference>
<dbReference type="SMR" id="Q7MM73"/>
<dbReference type="STRING" id="672.VV93_v1c11190"/>
<dbReference type="KEGG" id="vvy:VV1200"/>
<dbReference type="PATRIC" id="fig|196600.6.peg.1192"/>
<dbReference type="eggNOG" id="COG0315">
    <property type="taxonomic scope" value="Bacteria"/>
</dbReference>
<dbReference type="HOGENOM" id="CLU_074693_1_1_6"/>
<dbReference type="UniPathway" id="UPA00344"/>
<dbReference type="Proteomes" id="UP000002675">
    <property type="component" value="Chromosome I"/>
</dbReference>
<dbReference type="GO" id="GO:0061799">
    <property type="term" value="F:cyclic pyranopterin monophosphate synthase activity"/>
    <property type="evidence" value="ECO:0007669"/>
    <property type="project" value="UniProtKB-UniRule"/>
</dbReference>
<dbReference type="GO" id="GO:0061798">
    <property type="term" value="F:GTP 3',8'-cyclase activity"/>
    <property type="evidence" value="ECO:0007669"/>
    <property type="project" value="TreeGrafter"/>
</dbReference>
<dbReference type="GO" id="GO:0006777">
    <property type="term" value="P:Mo-molybdopterin cofactor biosynthetic process"/>
    <property type="evidence" value="ECO:0007669"/>
    <property type="project" value="UniProtKB-UniRule"/>
</dbReference>
<dbReference type="CDD" id="cd01420">
    <property type="entry name" value="MoaC_PE"/>
    <property type="match status" value="1"/>
</dbReference>
<dbReference type="FunFam" id="3.30.70.640:FF:000001">
    <property type="entry name" value="Cyclic pyranopterin monophosphate synthase"/>
    <property type="match status" value="1"/>
</dbReference>
<dbReference type="Gene3D" id="3.30.70.640">
    <property type="entry name" value="Molybdopterin cofactor biosynthesis C (MoaC) domain"/>
    <property type="match status" value="1"/>
</dbReference>
<dbReference type="HAMAP" id="MF_01224_B">
    <property type="entry name" value="MoaC_B"/>
    <property type="match status" value="1"/>
</dbReference>
<dbReference type="InterPro" id="IPR023045">
    <property type="entry name" value="MoaC"/>
</dbReference>
<dbReference type="InterPro" id="IPR047594">
    <property type="entry name" value="MoaC_bact/euk"/>
</dbReference>
<dbReference type="InterPro" id="IPR036522">
    <property type="entry name" value="MoaC_sf"/>
</dbReference>
<dbReference type="InterPro" id="IPR050105">
    <property type="entry name" value="MoCo_biosynth_MoaA/MoaC"/>
</dbReference>
<dbReference type="InterPro" id="IPR002820">
    <property type="entry name" value="Mopterin_CF_biosynth-C_dom"/>
</dbReference>
<dbReference type="NCBIfam" id="TIGR00581">
    <property type="entry name" value="moaC"/>
    <property type="match status" value="1"/>
</dbReference>
<dbReference type="NCBIfam" id="NF006870">
    <property type="entry name" value="PRK09364.1"/>
    <property type="match status" value="1"/>
</dbReference>
<dbReference type="PANTHER" id="PTHR22960:SF0">
    <property type="entry name" value="MOLYBDENUM COFACTOR BIOSYNTHESIS PROTEIN 1"/>
    <property type="match status" value="1"/>
</dbReference>
<dbReference type="PANTHER" id="PTHR22960">
    <property type="entry name" value="MOLYBDOPTERIN COFACTOR SYNTHESIS PROTEIN A"/>
    <property type="match status" value="1"/>
</dbReference>
<dbReference type="Pfam" id="PF01967">
    <property type="entry name" value="MoaC"/>
    <property type="match status" value="1"/>
</dbReference>
<dbReference type="SUPFAM" id="SSF55040">
    <property type="entry name" value="Molybdenum cofactor biosynthesis protein C, MoaC"/>
    <property type="match status" value="1"/>
</dbReference>
<keyword id="KW-0456">Lyase</keyword>
<keyword id="KW-0501">Molybdenum cofactor biosynthesis</keyword>
<proteinExistence type="inferred from homology"/>
<reference key="1">
    <citation type="journal article" date="2003" name="Genome Res.">
        <title>Comparative genome analysis of Vibrio vulnificus, a marine pathogen.</title>
        <authorList>
            <person name="Chen C.-Y."/>
            <person name="Wu K.-M."/>
            <person name="Chang Y.-C."/>
            <person name="Chang C.-H."/>
            <person name="Tsai H.-C."/>
            <person name="Liao T.-L."/>
            <person name="Liu Y.-M."/>
            <person name="Chen H.-J."/>
            <person name="Shen A.B.-T."/>
            <person name="Li J.-C."/>
            <person name="Su T.-L."/>
            <person name="Shao C.-P."/>
            <person name="Lee C.-T."/>
            <person name="Hor L.-I."/>
            <person name="Tsai S.-F."/>
        </authorList>
    </citation>
    <scope>NUCLEOTIDE SEQUENCE [LARGE SCALE GENOMIC DNA]</scope>
    <source>
        <strain>YJ016</strain>
    </source>
</reference>
<organism>
    <name type="scientific">Vibrio vulnificus (strain YJ016)</name>
    <dbReference type="NCBI Taxonomy" id="196600"/>
    <lineage>
        <taxon>Bacteria</taxon>
        <taxon>Pseudomonadati</taxon>
        <taxon>Pseudomonadota</taxon>
        <taxon>Gammaproteobacteria</taxon>
        <taxon>Vibrionales</taxon>
        <taxon>Vibrionaceae</taxon>
        <taxon>Vibrio</taxon>
    </lineage>
</organism>
<protein>
    <recommendedName>
        <fullName evidence="1">Cyclic pyranopterin monophosphate synthase</fullName>
        <ecNumber evidence="1">4.6.1.17</ecNumber>
    </recommendedName>
    <alternativeName>
        <fullName evidence="1">Molybdenum cofactor biosynthesis protein C</fullName>
    </alternativeName>
</protein>
<comment type="function">
    <text evidence="1">Catalyzes the conversion of (8S)-3',8-cyclo-7,8-dihydroguanosine 5'-triphosphate to cyclic pyranopterin monophosphate (cPMP).</text>
</comment>
<comment type="catalytic activity">
    <reaction evidence="1">
        <text>(8S)-3',8-cyclo-7,8-dihydroguanosine 5'-triphosphate = cyclic pyranopterin phosphate + diphosphate</text>
        <dbReference type="Rhea" id="RHEA:49580"/>
        <dbReference type="ChEBI" id="CHEBI:33019"/>
        <dbReference type="ChEBI" id="CHEBI:59648"/>
        <dbReference type="ChEBI" id="CHEBI:131766"/>
        <dbReference type="EC" id="4.6.1.17"/>
    </reaction>
</comment>
<comment type="pathway">
    <text evidence="1">Cofactor biosynthesis; molybdopterin biosynthesis.</text>
</comment>
<comment type="subunit">
    <text evidence="1">Homohexamer; trimer of dimers.</text>
</comment>
<comment type="similarity">
    <text evidence="1">Belongs to the MoaC family.</text>
</comment>
<evidence type="ECO:0000255" key="1">
    <source>
        <dbReference type="HAMAP-Rule" id="MF_01224"/>
    </source>
</evidence>